<comment type="subcellular location">
    <subcellularLocation>
        <location>Secreted</location>
    </subcellularLocation>
</comment>
<comment type="domain">
    <text>Avian ovomucoid consists of three homologous, tandem Kazal family inhibitory domains.</text>
</comment>
<reference key="1">
    <citation type="journal article" date="1987" name="Biochemistry">
        <title>Ovomucoid third domains from 100 avian species: isolation, sequences, and hypervariability of enzyme-inhibitor contact residues.</title>
        <authorList>
            <person name="Laskowski M. Jr."/>
            <person name="Kato I."/>
            <person name="Ardelt W."/>
            <person name="Cook J."/>
            <person name="Denton A."/>
            <person name="Empie M.W."/>
            <person name="Kohr W.J."/>
            <person name="Park S.J."/>
            <person name="Parks K."/>
            <person name="Schatzley B.L."/>
            <person name="Schoenberger O.L."/>
            <person name="Tashiro M."/>
            <person name="Vichot G."/>
            <person name="Whatley H.E."/>
            <person name="Wieczorek A."/>
            <person name="Wieczorek M."/>
        </authorList>
    </citation>
    <scope>PROTEIN SEQUENCE</scope>
</reference>
<organism>
    <name type="scientific">Numida meleagris</name>
    <name type="common">Helmeted guineafowl</name>
    <name type="synonym">Phasianus meleagris</name>
    <dbReference type="NCBI Taxonomy" id="8996"/>
    <lineage>
        <taxon>Eukaryota</taxon>
        <taxon>Metazoa</taxon>
        <taxon>Chordata</taxon>
        <taxon>Craniata</taxon>
        <taxon>Vertebrata</taxon>
        <taxon>Euteleostomi</taxon>
        <taxon>Archelosauria</taxon>
        <taxon>Archosauria</taxon>
        <taxon>Dinosauria</taxon>
        <taxon>Saurischia</taxon>
        <taxon>Theropoda</taxon>
        <taxon>Coelurosauria</taxon>
        <taxon>Aves</taxon>
        <taxon>Neognathae</taxon>
        <taxon>Galloanserae</taxon>
        <taxon>Galliformes</taxon>
        <taxon>Numididae</taxon>
        <taxon>Numida</taxon>
    </lineage>
</organism>
<name>IOVO_NUMME</name>
<proteinExistence type="evidence at protein level"/>
<evidence type="ECO:0000255" key="1">
    <source>
        <dbReference type="PROSITE-ProRule" id="PRU00798"/>
    </source>
</evidence>
<keyword id="KW-0903">Direct protein sequencing</keyword>
<keyword id="KW-1015">Disulfide bond</keyword>
<keyword id="KW-0325">Glycoprotein</keyword>
<keyword id="KW-0646">Protease inhibitor</keyword>
<keyword id="KW-0677">Repeat</keyword>
<keyword id="KW-0964">Secreted</keyword>
<keyword id="KW-0722">Serine protease inhibitor</keyword>
<accession>P68468</accession>
<accession>P05610</accession>
<feature type="chain" id="PRO_0000073149" description="Ovomucoid">
    <location>
        <begin position="1" status="less than"/>
        <end position="54" status="greater than"/>
    </location>
</feature>
<feature type="domain" description="Kazal-like" evidence="1">
    <location>
        <begin position="4"/>
        <end position="54"/>
    </location>
</feature>
<feature type="site" description="Reactive bond 3">
    <location>
        <begin position="16"/>
        <end position="17"/>
    </location>
</feature>
<feature type="glycosylation site" description="N-linked (GlcNAc...) asparagine">
    <location>
        <position position="43"/>
    </location>
</feature>
<feature type="disulfide bond">
    <location>
        <begin position="6"/>
        <end position="36"/>
    </location>
</feature>
<feature type="disulfide bond">
    <location>
        <begin position="14"/>
        <end position="33"/>
    </location>
</feature>
<feature type="disulfide bond">
    <location>
        <begin position="22"/>
        <end position="54"/>
    </location>
</feature>
<feature type="non-terminal residue">
    <location>
        <position position="1"/>
    </location>
</feature>
<feature type="non-terminal residue">
    <location>
        <position position="54"/>
    </location>
</feature>
<dbReference type="PIR" id="D31441">
    <property type="entry name" value="D31441"/>
</dbReference>
<dbReference type="SMR" id="P68468"/>
<dbReference type="GO" id="GO:0005576">
    <property type="term" value="C:extracellular region"/>
    <property type="evidence" value="ECO:0007669"/>
    <property type="project" value="UniProtKB-SubCell"/>
</dbReference>
<dbReference type="GO" id="GO:0004867">
    <property type="term" value="F:serine-type endopeptidase inhibitor activity"/>
    <property type="evidence" value="ECO:0007669"/>
    <property type="project" value="UniProtKB-KW"/>
</dbReference>
<dbReference type="CDD" id="cd00104">
    <property type="entry name" value="KAZAL_FS"/>
    <property type="match status" value="1"/>
</dbReference>
<dbReference type="FunFam" id="3.30.60.30:FF:000037">
    <property type="entry name" value="Ovomucoid"/>
    <property type="match status" value="1"/>
</dbReference>
<dbReference type="Gene3D" id="3.30.60.30">
    <property type="match status" value="1"/>
</dbReference>
<dbReference type="InterPro" id="IPR051597">
    <property type="entry name" value="Bifunctional_prot_inhibitor"/>
</dbReference>
<dbReference type="InterPro" id="IPR002350">
    <property type="entry name" value="Kazal_dom"/>
</dbReference>
<dbReference type="InterPro" id="IPR036058">
    <property type="entry name" value="Kazal_dom_sf"/>
</dbReference>
<dbReference type="InterPro" id="IPR001239">
    <property type="entry name" value="Prot_inh_Kazal-m"/>
</dbReference>
<dbReference type="PANTHER" id="PTHR47729:SF1">
    <property type="entry name" value="OVOMUCOID-LIKE-RELATED"/>
    <property type="match status" value="1"/>
</dbReference>
<dbReference type="PANTHER" id="PTHR47729">
    <property type="entry name" value="SERINE PEPTIDASE INHIBITOR, KAZAL TYPE 2, TANDEM DUPLICATE 1-RELATED"/>
    <property type="match status" value="1"/>
</dbReference>
<dbReference type="Pfam" id="PF00050">
    <property type="entry name" value="Kazal_1"/>
    <property type="match status" value="1"/>
</dbReference>
<dbReference type="PRINTS" id="PR00290">
    <property type="entry name" value="KAZALINHBTR"/>
</dbReference>
<dbReference type="SMART" id="SM00280">
    <property type="entry name" value="KAZAL"/>
    <property type="match status" value="1"/>
</dbReference>
<dbReference type="SUPFAM" id="SSF100895">
    <property type="entry name" value="Kazal-type serine protease inhibitors"/>
    <property type="match status" value="1"/>
</dbReference>
<dbReference type="PROSITE" id="PS00282">
    <property type="entry name" value="KAZAL_1"/>
    <property type="match status" value="1"/>
</dbReference>
<dbReference type="PROSITE" id="PS51465">
    <property type="entry name" value="KAZAL_2"/>
    <property type="match status" value="1"/>
</dbReference>
<sequence>LAAVDCSEYPKPACTMEYRPLCGSDNKTYDNKCNFCNAVVESNGTLTLSHFGKC</sequence>
<protein>
    <recommendedName>
        <fullName>Ovomucoid</fullName>
    </recommendedName>
</protein>